<protein>
    <recommendedName>
        <fullName evidence="1">N-acetyldiaminopimelate deacetylase</fullName>
        <ecNumber evidence="1">3.5.1.47</ecNumber>
    </recommendedName>
</protein>
<reference key="1">
    <citation type="journal article" date="2012" name="BMC Genomics">
        <title>Comparative genomics and transcriptomics of lineages I, II, and III strains of Listeria monocytogenes.</title>
        <authorList>
            <person name="Hain T."/>
            <person name="Ghai R."/>
            <person name="Billion A."/>
            <person name="Kuenne C.T."/>
            <person name="Steinweg C."/>
            <person name="Izar B."/>
            <person name="Mohamed W."/>
            <person name="Mraheil M."/>
            <person name="Domann E."/>
            <person name="Schaffrath S."/>
            <person name="Karst U."/>
            <person name="Goesmann A."/>
            <person name="Oehm S."/>
            <person name="Puhler A."/>
            <person name="Merkl R."/>
            <person name="Vorwerk S."/>
            <person name="Glaser P."/>
            <person name="Garrido P."/>
            <person name="Rusniok C."/>
            <person name="Buchrieser C."/>
            <person name="Goebel W."/>
            <person name="Chakraborty T."/>
        </authorList>
    </citation>
    <scope>NUCLEOTIDE SEQUENCE [LARGE SCALE GENOMIC DNA]</scope>
    <source>
        <strain>CLIP80459</strain>
    </source>
</reference>
<keyword id="KW-0028">Amino-acid biosynthesis</keyword>
<keyword id="KW-0220">Diaminopimelate biosynthesis</keyword>
<keyword id="KW-0378">Hydrolase</keyword>
<keyword id="KW-0457">Lysine biosynthesis</keyword>
<name>DAPEL_LISMC</name>
<organism>
    <name type="scientific">Listeria monocytogenes serotype 4b (strain CLIP80459)</name>
    <dbReference type="NCBI Taxonomy" id="568819"/>
    <lineage>
        <taxon>Bacteria</taxon>
        <taxon>Bacillati</taxon>
        <taxon>Bacillota</taxon>
        <taxon>Bacilli</taxon>
        <taxon>Bacillales</taxon>
        <taxon>Listeriaceae</taxon>
        <taxon>Listeria</taxon>
    </lineage>
</organism>
<comment type="function">
    <text evidence="1">Catalyzes the conversion of N-acetyl-diaminopimelate to diaminopimelate and acetate.</text>
</comment>
<comment type="catalytic activity">
    <reaction evidence="1">
        <text>N-acetyl-(2S,6S)-2,6-diaminopimelate + H2O = (2S,6S)-2,6-diaminopimelate + acetate</text>
        <dbReference type="Rhea" id="RHEA:20405"/>
        <dbReference type="ChEBI" id="CHEBI:15377"/>
        <dbReference type="ChEBI" id="CHEBI:30089"/>
        <dbReference type="ChEBI" id="CHEBI:57609"/>
        <dbReference type="ChEBI" id="CHEBI:58767"/>
        <dbReference type="EC" id="3.5.1.47"/>
    </reaction>
</comment>
<comment type="pathway">
    <text evidence="1">Amino-acid biosynthesis; L-lysine biosynthesis via DAP pathway; LL-2,6-diaminopimelate from (S)-tetrahydrodipicolinate (acetylase route): step 3/3.</text>
</comment>
<comment type="similarity">
    <text evidence="1">Belongs to the peptidase M20A family. N-acetyldiaminopimelate deacetylase subfamily.</text>
</comment>
<proteinExistence type="inferred from homology"/>
<evidence type="ECO:0000255" key="1">
    <source>
        <dbReference type="HAMAP-Rule" id="MF_01692"/>
    </source>
</evidence>
<feature type="chain" id="PRO_1000215933" description="N-acetyldiaminopimelate deacetylase">
    <location>
        <begin position="1"/>
        <end position="371"/>
    </location>
</feature>
<feature type="active site" evidence="1">
    <location>
        <position position="68"/>
    </location>
</feature>
<feature type="active site" description="Proton acceptor" evidence="1">
    <location>
        <position position="127"/>
    </location>
</feature>
<gene>
    <name type="ordered locus">Lm4b_01032</name>
</gene>
<accession>C1L1T3</accession>
<sequence>MLNEFIAIRRELHQIPETGYKELKTQAYLLDYISKLPSEHLEVKKWRTGILVLVKGTNPEKTIGYRTDIDALPITEETGLPFASKHPGNMHACGHDLHMSIALGVLTHFASKPAKDNLLFVFQPAEEGPGGAKPIMESAEFAEWRPDSIYGLHIAPEYKVGEIAIKPGLLFANTSELFISFKGKGGHAAYPHLANDMVVAASAFVGQMQTIISRNIDPMDSAVITIGRIHGGEIQNVIAETAYLDGTIRTLSPETMEIVWTRLKQLAKGWEEAYQCEVEFHPGSDYYQVDNDPVETEAFIHFLEEQYPESYVPARSAMTGEDFGYFLSEIKGFMFWLGVDSEYSLHHAKLSPKEEAIPFAIDVLIHFLESK</sequence>
<dbReference type="EC" id="3.5.1.47" evidence="1"/>
<dbReference type="EMBL" id="FM242711">
    <property type="protein sequence ID" value="CAS04798.1"/>
    <property type="molecule type" value="Genomic_DNA"/>
</dbReference>
<dbReference type="RefSeq" id="WP_003726428.1">
    <property type="nucleotide sequence ID" value="NC_012488.1"/>
</dbReference>
<dbReference type="SMR" id="C1L1T3"/>
<dbReference type="MEROPS" id="M20.A27"/>
<dbReference type="KEGG" id="lmc:Lm4b_01032"/>
<dbReference type="HOGENOM" id="CLU_023257_0_1_9"/>
<dbReference type="UniPathway" id="UPA00034">
    <property type="reaction ID" value="UER00024"/>
</dbReference>
<dbReference type="GO" id="GO:0050118">
    <property type="term" value="F:N-acetyldiaminopimelate deacetylase activity"/>
    <property type="evidence" value="ECO:0007669"/>
    <property type="project" value="UniProtKB-UniRule"/>
</dbReference>
<dbReference type="GO" id="GO:0019877">
    <property type="term" value="P:diaminopimelate biosynthetic process"/>
    <property type="evidence" value="ECO:0007669"/>
    <property type="project" value="UniProtKB-UniRule"/>
</dbReference>
<dbReference type="GO" id="GO:0009089">
    <property type="term" value="P:lysine biosynthetic process via diaminopimelate"/>
    <property type="evidence" value="ECO:0007669"/>
    <property type="project" value="UniProtKB-UniRule"/>
</dbReference>
<dbReference type="CDD" id="cd05670">
    <property type="entry name" value="M20_Acy1_YkuR-like"/>
    <property type="match status" value="1"/>
</dbReference>
<dbReference type="FunFam" id="3.30.70.360:FF:000001">
    <property type="entry name" value="N-acetyldiaminopimelate deacetylase"/>
    <property type="match status" value="1"/>
</dbReference>
<dbReference type="Gene3D" id="3.30.70.360">
    <property type="match status" value="1"/>
</dbReference>
<dbReference type="Gene3D" id="3.40.630.10">
    <property type="entry name" value="Zn peptidases"/>
    <property type="match status" value="1"/>
</dbReference>
<dbReference type="HAMAP" id="MF_01692">
    <property type="entry name" value="DapEL"/>
    <property type="match status" value="1"/>
</dbReference>
<dbReference type="InterPro" id="IPR023905">
    <property type="entry name" value="AcetylDAP_deacetylase"/>
</dbReference>
<dbReference type="InterPro" id="IPR017439">
    <property type="entry name" value="Amidohydrolase"/>
</dbReference>
<dbReference type="InterPro" id="IPR036264">
    <property type="entry name" value="Bact_exopeptidase_dim_dom"/>
</dbReference>
<dbReference type="InterPro" id="IPR002933">
    <property type="entry name" value="Peptidase_M20"/>
</dbReference>
<dbReference type="InterPro" id="IPR011650">
    <property type="entry name" value="Peptidase_M20_dimer"/>
</dbReference>
<dbReference type="NCBIfam" id="TIGR01891">
    <property type="entry name" value="amidohydrolases"/>
    <property type="match status" value="1"/>
</dbReference>
<dbReference type="PANTHER" id="PTHR11014:SF98">
    <property type="entry name" value="N-ACETYLDIAMINOPIMELATE DEACETYLASE"/>
    <property type="match status" value="1"/>
</dbReference>
<dbReference type="PANTHER" id="PTHR11014">
    <property type="entry name" value="PEPTIDASE M20 FAMILY MEMBER"/>
    <property type="match status" value="1"/>
</dbReference>
<dbReference type="Pfam" id="PF07687">
    <property type="entry name" value="M20_dimer"/>
    <property type="match status" value="1"/>
</dbReference>
<dbReference type="Pfam" id="PF01546">
    <property type="entry name" value="Peptidase_M20"/>
    <property type="match status" value="1"/>
</dbReference>
<dbReference type="PIRSF" id="PIRSF005962">
    <property type="entry name" value="Pept_M20D_amidohydro"/>
    <property type="match status" value="1"/>
</dbReference>
<dbReference type="SUPFAM" id="SSF55031">
    <property type="entry name" value="Bacterial exopeptidase dimerisation domain"/>
    <property type="match status" value="1"/>
</dbReference>
<dbReference type="SUPFAM" id="SSF53187">
    <property type="entry name" value="Zn-dependent exopeptidases"/>
    <property type="match status" value="1"/>
</dbReference>